<evidence type="ECO:0000255" key="1">
    <source>
        <dbReference type="HAMAP-Rule" id="MF_00378"/>
    </source>
</evidence>
<gene>
    <name evidence="1" type="primary">xseA</name>
    <name type="ordered locus">LBA1331</name>
</gene>
<sequence>MAENKYLTVTDLNYYITQKFKNDPYLHKVFLQGELSNFRYRRNSHQYFSLKDEKSKINVVMFRSYFDKVKFKPEEGMKVYVTGYVSVYGPQGSYQFYAENMEPAGLGALYEQLKQLQVKLAKEGLFNPEHKKKIPRFPDRIAVVTSASGAVIHDIMVTANRRFPHAEIDLFPAQVQGDTAAESLVRAMRQIAAEGDKYDVMIIGRGGGSLEDLWPFNEEEVVRQVYNMQMPVISSVGHETDTTLCDLVADARAATPTAAAEYATPNLMDELAGIHQLQSRLFSSMQTIIRQKRDRLNRIQNSIIMREPTRLYDQQIETVDRLKQRLQNSMQNKLDHSKQDYRLLNQRLFAVNPDKQINQMKQQRLFLAKRLSDNMQHYLKDKRNIFAQIVQQLDDYSPLKTLERGFVYTTDRDGKTISSVKQVNKNDSLNLHFKDGQVAAKVVEVKEEKNANEEK</sequence>
<dbReference type="EC" id="3.1.11.6" evidence="1"/>
<dbReference type="EMBL" id="CP000033">
    <property type="protein sequence ID" value="AAV43158.1"/>
    <property type="molecule type" value="Genomic_DNA"/>
</dbReference>
<dbReference type="RefSeq" id="WP_003547941.1">
    <property type="nucleotide sequence ID" value="NC_006814.3"/>
</dbReference>
<dbReference type="RefSeq" id="YP_194189.1">
    <property type="nucleotide sequence ID" value="NC_006814.3"/>
</dbReference>
<dbReference type="SMR" id="Q5FJG6"/>
<dbReference type="STRING" id="272621.LBA1331"/>
<dbReference type="GeneID" id="93289586"/>
<dbReference type="KEGG" id="lac:LBA1331"/>
<dbReference type="PATRIC" id="fig|272621.13.peg.1259"/>
<dbReference type="eggNOG" id="COG1570">
    <property type="taxonomic scope" value="Bacteria"/>
</dbReference>
<dbReference type="HOGENOM" id="CLU_023625_3_1_9"/>
<dbReference type="OrthoDB" id="9802795at2"/>
<dbReference type="BioCyc" id="LACI272621:G1G49-1308-MONOMER"/>
<dbReference type="Proteomes" id="UP000006381">
    <property type="component" value="Chromosome"/>
</dbReference>
<dbReference type="GO" id="GO:0005737">
    <property type="term" value="C:cytoplasm"/>
    <property type="evidence" value="ECO:0007669"/>
    <property type="project" value="UniProtKB-SubCell"/>
</dbReference>
<dbReference type="GO" id="GO:0009318">
    <property type="term" value="C:exodeoxyribonuclease VII complex"/>
    <property type="evidence" value="ECO:0007669"/>
    <property type="project" value="InterPro"/>
</dbReference>
<dbReference type="GO" id="GO:0008855">
    <property type="term" value="F:exodeoxyribonuclease VII activity"/>
    <property type="evidence" value="ECO:0007669"/>
    <property type="project" value="UniProtKB-UniRule"/>
</dbReference>
<dbReference type="GO" id="GO:0003676">
    <property type="term" value="F:nucleic acid binding"/>
    <property type="evidence" value="ECO:0007669"/>
    <property type="project" value="InterPro"/>
</dbReference>
<dbReference type="GO" id="GO:0006308">
    <property type="term" value="P:DNA catabolic process"/>
    <property type="evidence" value="ECO:0007669"/>
    <property type="project" value="UniProtKB-UniRule"/>
</dbReference>
<dbReference type="CDD" id="cd04489">
    <property type="entry name" value="ExoVII_LU_OBF"/>
    <property type="match status" value="1"/>
</dbReference>
<dbReference type="HAMAP" id="MF_00378">
    <property type="entry name" value="Exonuc_7_L"/>
    <property type="match status" value="1"/>
</dbReference>
<dbReference type="InterPro" id="IPR003753">
    <property type="entry name" value="Exonuc_VII_L"/>
</dbReference>
<dbReference type="InterPro" id="IPR020579">
    <property type="entry name" value="Exonuc_VII_lsu_C"/>
</dbReference>
<dbReference type="InterPro" id="IPR025824">
    <property type="entry name" value="OB-fold_nuc-bd_dom"/>
</dbReference>
<dbReference type="NCBIfam" id="TIGR00237">
    <property type="entry name" value="xseA"/>
    <property type="match status" value="1"/>
</dbReference>
<dbReference type="PANTHER" id="PTHR30008">
    <property type="entry name" value="EXODEOXYRIBONUCLEASE 7 LARGE SUBUNIT"/>
    <property type="match status" value="1"/>
</dbReference>
<dbReference type="PANTHER" id="PTHR30008:SF0">
    <property type="entry name" value="EXODEOXYRIBONUCLEASE 7 LARGE SUBUNIT"/>
    <property type="match status" value="1"/>
</dbReference>
<dbReference type="Pfam" id="PF02601">
    <property type="entry name" value="Exonuc_VII_L"/>
    <property type="match status" value="1"/>
</dbReference>
<dbReference type="Pfam" id="PF13742">
    <property type="entry name" value="tRNA_anti_2"/>
    <property type="match status" value="1"/>
</dbReference>
<keyword id="KW-0963">Cytoplasm</keyword>
<keyword id="KW-0269">Exonuclease</keyword>
<keyword id="KW-0378">Hydrolase</keyword>
<keyword id="KW-0540">Nuclease</keyword>
<keyword id="KW-1185">Reference proteome</keyword>
<accession>Q5FJG6</accession>
<reference key="1">
    <citation type="journal article" date="2005" name="Proc. Natl. Acad. Sci. U.S.A.">
        <title>Complete genome sequence of the probiotic lactic acid bacterium Lactobacillus acidophilus NCFM.</title>
        <authorList>
            <person name="Altermann E."/>
            <person name="Russell W.M."/>
            <person name="Azcarate-Peril M.A."/>
            <person name="Barrangou R."/>
            <person name="Buck B.L."/>
            <person name="McAuliffe O."/>
            <person name="Souther N."/>
            <person name="Dobson A."/>
            <person name="Duong T."/>
            <person name="Callanan M."/>
            <person name="Lick S."/>
            <person name="Hamrick A."/>
            <person name="Cano R."/>
            <person name="Klaenhammer T.R."/>
        </authorList>
    </citation>
    <scope>NUCLEOTIDE SEQUENCE [LARGE SCALE GENOMIC DNA]</scope>
    <source>
        <strain>ATCC 700396 / NCK56 / N2 / NCFM</strain>
    </source>
</reference>
<feature type="chain" id="PRO_0000273662" description="Exodeoxyribonuclease 7 large subunit">
    <location>
        <begin position="1"/>
        <end position="455"/>
    </location>
</feature>
<proteinExistence type="inferred from homology"/>
<organism>
    <name type="scientific">Lactobacillus acidophilus (strain ATCC 700396 / NCK56 / N2 / NCFM)</name>
    <dbReference type="NCBI Taxonomy" id="272621"/>
    <lineage>
        <taxon>Bacteria</taxon>
        <taxon>Bacillati</taxon>
        <taxon>Bacillota</taxon>
        <taxon>Bacilli</taxon>
        <taxon>Lactobacillales</taxon>
        <taxon>Lactobacillaceae</taxon>
        <taxon>Lactobacillus</taxon>
    </lineage>
</organism>
<name>EX7L_LACAC</name>
<protein>
    <recommendedName>
        <fullName evidence="1">Exodeoxyribonuclease 7 large subunit</fullName>
        <ecNumber evidence="1">3.1.11.6</ecNumber>
    </recommendedName>
    <alternativeName>
        <fullName evidence="1">Exodeoxyribonuclease VII large subunit</fullName>
        <shortName evidence="1">Exonuclease VII large subunit</shortName>
    </alternativeName>
</protein>
<comment type="function">
    <text evidence="1">Bidirectionally degrades single-stranded DNA into large acid-insoluble oligonucleotides, which are then degraded further into small acid-soluble oligonucleotides.</text>
</comment>
<comment type="catalytic activity">
    <reaction evidence="1">
        <text>Exonucleolytic cleavage in either 5'- to 3'- or 3'- to 5'-direction to yield nucleoside 5'-phosphates.</text>
        <dbReference type="EC" id="3.1.11.6"/>
    </reaction>
</comment>
<comment type="subunit">
    <text evidence="1">Heterooligomer composed of large and small subunits.</text>
</comment>
<comment type="subcellular location">
    <subcellularLocation>
        <location evidence="1">Cytoplasm</location>
    </subcellularLocation>
</comment>
<comment type="similarity">
    <text evidence="1">Belongs to the XseA family.</text>
</comment>